<comment type="function">
    <text evidence="1">Catalyzes the interconversion of 2-phosphoglycerate and 3-phosphoglycerate.</text>
</comment>
<comment type="catalytic activity">
    <reaction evidence="1">
        <text>(2R)-2-phosphoglycerate = (2R)-3-phosphoglycerate</text>
        <dbReference type="Rhea" id="RHEA:15901"/>
        <dbReference type="ChEBI" id="CHEBI:58272"/>
        <dbReference type="ChEBI" id="CHEBI:58289"/>
        <dbReference type="EC" id="5.4.2.11"/>
    </reaction>
</comment>
<comment type="pathway">
    <text evidence="1">Carbohydrate degradation; glycolysis; pyruvate from D-glyceraldehyde 3-phosphate: step 3/5.</text>
</comment>
<comment type="similarity">
    <text evidence="1">Belongs to the phosphoglycerate mutase family. BPG-dependent PGAM subfamily.</text>
</comment>
<organism>
    <name type="scientific">Mycobacterium bovis (strain BCG / Tokyo 172 / ATCC 35737 / TMC 1019)</name>
    <dbReference type="NCBI Taxonomy" id="561275"/>
    <lineage>
        <taxon>Bacteria</taxon>
        <taxon>Bacillati</taxon>
        <taxon>Actinomycetota</taxon>
        <taxon>Actinomycetes</taxon>
        <taxon>Mycobacteriales</taxon>
        <taxon>Mycobacteriaceae</taxon>
        <taxon>Mycobacterium</taxon>
        <taxon>Mycobacterium tuberculosis complex</taxon>
    </lineage>
</organism>
<dbReference type="EC" id="5.4.2.11" evidence="1"/>
<dbReference type="EMBL" id="AP010918">
    <property type="protein sequence ID" value="BAH24796.1"/>
    <property type="molecule type" value="Genomic_DNA"/>
</dbReference>
<dbReference type="RefSeq" id="WP_003402379.1">
    <property type="nucleotide sequence ID" value="NZ_CP014566.1"/>
</dbReference>
<dbReference type="SMR" id="C1AKG7"/>
<dbReference type="KEGG" id="mbt:JTY_0500"/>
<dbReference type="HOGENOM" id="CLU_033323_1_1_11"/>
<dbReference type="UniPathway" id="UPA00109">
    <property type="reaction ID" value="UER00186"/>
</dbReference>
<dbReference type="GO" id="GO:0004619">
    <property type="term" value="F:phosphoglycerate mutase activity"/>
    <property type="evidence" value="ECO:0007669"/>
    <property type="project" value="UniProtKB-EC"/>
</dbReference>
<dbReference type="GO" id="GO:0006094">
    <property type="term" value="P:gluconeogenesis"/>
    <property type="evidence" value="ECO:0007669"/>
    <property type="project" value="UniProtKB-UniRule"/>
</dbReference>
<dbReference type="GO" id="GO:0006096">
    <property type="term" value="P:glycolytic process"/>
    <property type="evidence" value="ECO:0007669"/>
    <property type="project" value="UniProtKB-UniRule"/>
</dbReference>
<dbReference type="CDD" id="cd07067">
    <property type="entry name" value="HP_PGM_like"/>
    <property type="match status" value="1"/>
</dbReference>
<dbReference type="FunFam" id="3.40.50.1240:FF:000012">
    <property type="entry name" value="Phosphoglycerate mutase 1"/>
    <property type="match status" value="1"/>
</dbReference>
<dbReference type="Gene3D" id="3.40.50.1240">
    <property type="entry name" value="Phosphoglycerate mutase-like"/>
    <property type="match status" value="1"/>
</dbReference>
<dbReference type="HAMAP" id="MF_01039">
    <property type="entry name" value="PGAM_GpmA"/>
    <property type="match status" value="1"/>
</dbReference>
<dbReference type="InterPro" id="IPR013078">
    <property type="entry name" value="His_Pase_superF_clade-1"/>
</dbReference>
<dbReference type="InterPro" id="IPR029033">
    <property type="entry name" value="His_PPase_superfam"/>
</dbReference>
<dbReference type="InterPro" id="IPR001345">
    <property type="entry name" value="PG/BPGM_mutase_AS"/>
</dbReference>
<dbReference type="InterPro" id="IPR005952">
    <property type="entry name" value="Phosphogly_mut1"/>
</dbReference>
<dbReference type="NCBIfam" id="TIGR01258">
    <property type="entry name" value="pgm_1"/>
    <property type="match status" value="1"/>
</dbReference>
<dbReference type="NCBIfam" id="NF010713">
    <property type="entry name" value="PRK14115.1"/>
    <property type="match status" value="1"/>
</dbReference>
<dbReference type="NCBIfam" id="NF010718">
    <property type="entry name" value="PRK14120.1"/>
    <property type="match status" value="1"/>
</dbReference>
<dbReference type="PANTHER" id="PTHR11931">
    <property type="entry name" value="PHOSPHOGLYCERATE MUTASE"/>
    <property type="match status" value="1"/>
</dbReference>
<dbReference type="Pfam" id="PF00300">
    <property type="entry name" value="His_Phos_1"/>
    <property type="match status" value="1"/>
</dbReference>
<dbReference type="PIRSF" id="PIRSF000709">
    <property type="entry name" value="6PFK_2-Ptase"/>
    <property type="match status" value="1"/>
</dbReference>
<dbReference type="SMART" id="SM00855">
    <property type="entry name" value="PGAM"/>
    <property type="match status" value="1"/>
</dbReference>
<dbReference type="SUPFAM" id="SSF53254">
    <property type="entry name" value="Phosphoglycerate mutase-like"/>
    <property type="match status" value="1"/>
</dbReference>
<dbReference type="PROSITE" id="PS00175">
    <property type="entry name" value="PG_MUTASE"/>
    <property type="match status" value="1"/>
</dbReference>
<name>GPMA_MYCBT</name>
<proteinExistence type="inferred from homology"/>
<protein>
    <recommendedName>
        <fullName evidence="1">2,3-bisphosphoglycerate-dependent phosphoglycerate mutase</fullName>
        <shortName evidence="1">BPG-dependent PGAM</shortName>
        <shortName evidence="1">PGAM</shortName>
        <shortName evidence="1">Phosphoglyceromutase</shortName>
        <shortName evidence="1">dPGM</shortName>
        <ecNumber evidence="1">5.4.2.11</ecNumber>
    </recommendedName>
</protein>
<gene>
    <name evidence="1" type="primary">gpmA</name>
    <name type="ordered locus">JTY_0500</name>
</gene>
<sequence length="249" mass="27216">MANTGSLVLLRHGESDWNALNLFTGWVDVGLTDKGQAEAVRSGELIAEHDLLPDVLYTSLLRRAITTAHLALDSADRLWIPVRRSWRLNERHYGALQGLDKAETKARYGEEQFMAWRRSYDTPPPPIERGSQFSQDADPRYADIGGGPLTECLADVVARFLPYFTDVIVGDLRVGKTVLIVAHGNSLRALVKHLDQMSDDEIVGLNIPTGIPLRYDLDSAMRPLVRGGTYLDPEAAAAGAAAVAGQGRG</sequence>
<evidence type="ECO:0000255" key="1">
    <source>
        <dbReference type="HAMAP-Rule" id="MF_01039"/>
    </source>
</evidence>
<keyword id="KW-0312">Gluconeogenesis</keyword>
<keyword id="KW-0324">Glycolysis</keyword>
<keyword id="KW-0413">Isomerase</keyword>
<reference key="1">
    <citation type="journal article" date="2009" name="Vaccine">
        <title>Whole genome sequence analysis of Mycobacterium bovis bacillus Calmette-Guerin (BCG) Tokyo 172: a comparative study of BCG vaccine substrains.</title>
        <authorList>
            <person name="Seki M."/>
            <person name="Honda I."/>
            <person name="Fujita I."/>
            <person name="Yano I."/>
            <person name="Yamamoto S."/>
            <person name="Koyama A."/>
        </authorList>
    </citation>
    <scope>NUCLEOTIDE SEQUENCE [LARGE SCALE GENOMIC DNA]</scope>
    <source>
        <strain>BCG / Tokyo 172 / ATCC 35737 / TMC 1019</strain>
    </source>
</reference>
<accession>C1AKG7</accession>
<feature type="chain" id="PRO_1000149523" description="2,3-bisphosphoglycerate-dependent phosphoglycerate mutase">
    <location>
        <begin position="1"/>
        <end position="249"/>
    </location>
</feature>
<feature type="active site" description="Tele-phosphohistidine intermediate" evidence="1">
    <location>
        <position position="12"/>
    </location>
</feature>
<feature type="active site" description="Proton donor/acceptor" evidence="1">
    <location>
        <position position="90"/>
    </location>
</feature>
<feature type="binding site" evidence="1">
    <location>
        <begin position="11"/>
        <end position="18"/>
    </location>
    <ligand>
        <name>substrate</name>
    </ligand>
</feature>
<feature type="binding site" evidence="1">
    <location>
        <begin position="24"/>
        <end position="25"/>
    </location>
    <ligand>
        <name>substrate</name>
    </ligand>
</feature>
<feature type="binding site" evidence="1">
    <location>
        <position position="63"/>
    </location>
    <ligand>
        <name>substrate</name>
    </ligand>
</feature>
<feature type="binding site" evidence="1">
    <location>
        <begin position="90"/>
        <end position="93"/>
    </location>
    <ligand>
        <name>substrate</name>
    </ligand>
</feature>
<feature type="binding site" evidence="1">
    <location>
        <position position="101"/>
    </location>
    <ligand>
        <name>substrate</name>
    </ligand>
</feature>
<feature type="binding site" evidence="1">
    <location>
        <begin position="117"/>
        <end position="118"/>
    </location>
    <ligand>
        <name>substrate</name>
    </ligand>
</feature>
<feature type="binding site" evidence="1">
    <location>
        <begin position="184"/>
        <end position="185"/>
    </location>
    <ligand>
        <name>substrate</name>
    </ligand>
</feature>
<feature type="site" description="Transition state stabilizer" evidence="1">
    <location>
        <position position="183"/>
    </location>
</feature>